<sequence length="315" mass="34736">MNPIQHILDTYPLIVLDGAMATELERKGCNLNDSLWSAKILMEEPELIKQVHTDYFAAGADCAITASYQSTFEGFAARGLSEAEARRLIELSVSIAAEARDEFWSLEENRLNRPKPIIAASIGPYGAYLADGSEYRGNYAISEDELIEFHRPRMKALIEAGADVLACETIPCLTEAKAIVRLLKEFPETYAWISFSAKDGLHISDGTPAADCASWLDEHRQIAALGINCTPLQHIPSLIEELKKNTSKPIIVYPNSGEQYDPETKTWNGAACAESYGASARTWHEKGARLIGGCCRTKPENIQEIAAWARSLKTT</sequence>
<proteinExistence type="predicted"/>
<organism>
    <name type="scientific">Bacillus subtilis (strain 168)</name>
    <dbReference type="NCBI Taxonomy" id="224308"/>
    <lineage>
        <taxon>Bacteria</taxon>
        <taxon>Bacillati</taxon>
        <taxon>Bacillota</taxon>
        <taxon>Bacilli</taxon>
        <taxon>Bacillales</taxon>
        <taxon>Bacillaceae</taxon>
        <taxon>Bacillus</taxon>
    </lineage>
</organism>
<reference key="1">
    <citation type="journal article" date="1997" name="DNA Res.">
        <title>Sequence analysis of a 45-kb segment in the 19 degrees-23 degrees region of the Bacillus subtilis chromosome containing glpT and mpr loci.</title>
        <authorList>
            <person name="Haga K."/>
            <person name="Liu H."/>
            <person name="Takahashi H."/>
            <person name="Yoshikawa H."/>
        </authorList>
    </citation>
    <scope>NUCLEOTIDE SEQUENCE [GENOMIC DNA]</scope>
    <source>
        <strain>168</strain>
    </source>
</reference>
<reference key="2">
    <citation type="journal article" date="1997" name="Nature">
        <title>The complete genome sequence of the Gram-positive bacterium Bacillus subtilis.</title>
        <authorList>
            <person name="Kunst F."/>
            <person name="Ogasawara N."/>
            <person name="Moszer I."/>
            <person name="Albertini A.M."/>
            <person name="Alloni G."/>
            <person name="Azevedo V."/>
            <person name="Bertero M.G."/>
            <person name="Bessieres P."/>
            <person name="Bolotin A."/>
            <person name="Borchert S."/>
            <person name="Borriss R."/>
            <person name="Boursier L."/>
            <person name="Brans A."/>
            <person name="Braun M."/>
            <person name="Brignell S.C."/>
            <person name="Bron S."/>
            <person name="Brouillet S."/>
            <person name="Bruschi C.V."/>
            <person name="Caldwell B."/>
            <person name="Capuano V."/>
            <person name="Carter N.M."/>
            <person name="Choi S.-K."/>
            <person name="Codani J.-J."/>
            <person name="Connerton I.F."/>
            <person name="Cummings N.J."/>
            <person name="Daniel R.A."/>
            <person name="Denizot F."/>
            <person name="Devine K.M."/>
            <person name="Duesterhoeft A."/>
            <person name="Ehrlich S.D."/>
            <person name="Emmerson P.T."/>
            <person name="Entian K.-D."/>
            <person name="Errington J."/>
            <person name="Fabret C."/>
            <person name="Ferrari E."/>
            <person name="Foulger D."/>
            <person name="Fritz C."/>
            <person name="Fujita M."/>
            <person name="Fujita Y."/>
            <person name="Fuma S."/>
            <person name="Galizzi A."/>
            <person name="Galleron N."/>
            <person name="Ghim S.-Y."/>
            <person name="Glaser P."/>
            <person name="Goffeau A."/>
            <person name="Golightly E.J."/>
            <person name="Grandi G."/>
            <person name="Guiseppi G."/>
            <person name="Guy B.J."/>
            <person name="Haga K."/>
            <person name="Haiech J."/>
            <person name="Harwood C.R."/>
            <person name="Henaut A."/>
            <person name="Hilbert H."/>
            <person name="Holsappel S."/>
            <person name="Hosono S."/>
            <person name="Hullo M.-F."/>
            <person name="Itaya M."/>
            <person name="Jones L.-M."/>
            <person name="Joris B."/>
            <person name="Karamata D."/>
            <person name="Kasahara Y."/>
            <person name="Klaerr-Blanchard M."/>
            <person name="Klein C."/>
            <person name="Kobayashi Y."/>
            <person name="Koetter P."/>
            <person name="Koningstein G."/>
            <person name="Krogh S."/>
            <person name="Kumano M."/>
            <person name="Kurita K."/>
            <person name="Lapidus A."/>
            <person name="Lardinois S."/>
            <person name="Lauber J."/>
            <person name="Lazarevic V."/>
            <person name="Lee S.-M."/>
            <person name="Levine A."/>
            <person name="Liu H."/>
            <person name="Masuda S."/>
            <person name="Mauel C."/>
            <person name="Medigue C."/>
            <person name="Medina N."/>
            <person name="Mellado R.P."/>
            <person name="Mizuno M."/>
            <person name="Moestl D."/>
            <person name="Nakai S."/>
            <person name="Noback M."/>
            <person name="Noone D."/>
            <person name="O'Reilly M."/>
            <person name="Ogawa K."/>
            <person name="Ogiwara A."/>
            <person name="Oudega B."/>
            <person name="Park S.-H."/>
            <person name="Parro V."/>
            <person name="Pohl T.M."/>
            <person name="Portetelle D."/>
            <person name="Porwollik S."/>
            <person name="Prescott A.M."/>
            <person name="Presecan E."/>
            <person name="Pujic P."/>
            <person name="Purnelle B."/>
            <person name="Rapoport G."/>
            <person name="Rey M."/>
            <person name="Reynolds S."/>
            <person name="Rieger M."/>
            <person name="Rivolta C."/>
            <person name="Rocha E."/>
            <person name="Roche B."/>
            <person name="Rose M."/>
            <person name="Sadaie Y."/>
            <person name="Sato T."/>
            <person name="Scanlan E."/>
            <person name="Schleich S."/>
            <person name="Schroeter R."/>
            <person name="Scoffone F."/>
            <person name="Sekiguchi J."/>
            <person name="Sekowska A."/>
            <person name="Seror S.J."/>
            <person name="Serror P."/>
            <person name="Shin B.-S."/>
            <person name="Soldo B."/>
            <person name="Sorokin A."/>
            <person name="Tacconi E."/>
            <person name="Takagi T."/>
            <person name="Takahashi H."/>
            <person name="Takemaru K."/>
            <person name="Takeuchi M."/>
            <person name="Tamakoshi A."/>
            <person name="Tanaka T."/>
            <person name="Terpstra P."/>
            <person name="Tognoni A."/>
            <person name="Tosato V."/>
            <person name="Uchiyama S."/>
            <person name="Vandenbol M."/>
            <person name="Vannier F."/>
            <person name="Vassarotti A."/>
            <person name="Viari A."/>
            <person name="Wambutt R."/>
            <person name="Wedler E."/>
            <person name="Wedler H."/>
            <person name="Weitzenegger T."/>
            <person name="Winters P."/>
            <person name="Wipat A."/>
            <person name="Yamamoto H."/>
            <person name="Yamane K."/>
            <person name="Yasumoto K."/>
            <person name="Yata K."/>
            <person name="Yoshida K."/>
            <person name="Yoshikawa H.-F."/>
            <person name="Zumstein E."/>
            <person name="Yoshikawa H."/>
            <person name="Danchin A."/>
        </authorList>
    </citation>
    <scope>NUCLEOTIDE SEQUENCE [LARGE SCALE GENOMIC DNA]</scope>
    <source>
        <strain>168</strain>
    </source>
</reference>
<reference key="3">
    <citation type="journal article" date="2001" name="Biochim. Biophys. Acta">
        <title>Tn10 insertional mutations of Bacillus subtilis that block the biosynthesis of bacilysin.</title>
        <authorList>
            <person name="Yazgan A."/>
            <person name="Oezcengiz G."/>
            <person name="Marahiel M.A."/>
        </authorList>
    </citation>
    <scope>DISRUPTION PHENOTYPE</scope>
    <source>
        <strain>168 / PY79</strain>
    </source>
</reference>
<name>HMT_BACSU</name>
<comment type="catalytic activity">
    <reaction>
        <text>S-methyl-L-methionine + L-homocysteine = 2 L-methionine + H(+)</text>
        <dbReference type="Rhea" id="RHEA:26337"/>
        <dbReference type="ChEBI" id="CHEBI:15378"/>
        <dbReference type="ChEBI" id="CHEBI:57844"/>
        <dbReference type="ChEBI" id="CHEBI:58199"/>
        <dbReference type="ChEBI" id="CHEBI:58252"/>
        <dbReference type="EC" id="2.1.1.10"/>
    </reaction>
</comment>
<comment type="cofactor">
    <cofactor evidence="1">
        <name>Zn(2+)</name>
        <dbReference type="ChEBI" id="CHEBI:29105"/>
    </cofactor>
</comment>
<comment type="disruption phenotype">
    <text evidence="2">Cells lacking this gene show reduced bacilysin biosynthetic activity.</text>
</comment>
<keyword id="KW-0028">Amino-acid biosynthesis</keyword>
<keyword id="KW-0479">Metal-binding</keyword>
<keyword id="KW-0486">Methionine biosynthesis</keyword>
<keyword id="KW-0489">Methyltransferase</keyword>
<keyword id="KW-1185">Reference proteome</keyword>
<keyword id="KW-0949">S-adenosyl-L-methionine</keyword>
<keyword id="KW-0808">Transferase</keyword>
<keyword id="KW-0862">Zinc</keyword>
<protein>
    <recommendedName>
        <fullName>Homocysteine S-methyltransferase YbgG</fullName>
        <ecNumber>2.1.1.10</ecNumber>
    </recommendedName>
    <alternativeName>
        <fullName>S-methylmethionine:homocysteine methyltransferase</fullName>
    </alternativeName>
</protein>
<accession>O31463</accession>
<accession>Q7DL43</accession>
<dbReference type="EC" id="2.1.1.10"/>
<dbReference type="EMBL" id="AB006424">
    <property type="protein sequence ID" value="BAA33139.1"/>
    <property type="molecule type" value="Genomic_DNA"/>
</dbReference>
<dbReference type="EMBL" id="AL009126">
    <property type="protein sequence ID" value="CAB12035.1"/>
    <property type="molecule type" value="Genomic_DNA"/>
</dbReference>
<dbReference type="PIR" id="B69751">
    <property type="entry name" value="B69751"/>
</dbReference>
<dbReference type="RefSeq" id="NP_388123.1">
    <property type="nucleotide sequence ID" value="NC_000964.3"/>
</dbReference>
<dbReference type="SMR" id="O31463"/>
<dbReference type="FunCoup" id="O31463">
    <property type="interactions" value="312"/>
</dbReference>
<dbReference type="STRING" id="224308.BSU02410"/>
<dbReference type="PaxDb" id="224308-BSU02410"/>
<dbReference type="DNASU" id="938412"/>
<dbReference type="EnsemblBacteria" id="CAB12035">
    <property type="protein sequence ID" value="CAB12035"/>
    <property type="gene ID" value="BSU_02410"/>
</dbReference>
<dbReference type="GeneID" id="938412"/>
<dbReference type="KEGG" id="bsu:BSU02410"/>
<dbReference type="PATRIC" id="fig|224308.179.peg.247"/>
<dbReference type="eggNOG" id="COG2040">
    <property type="taxonomic scope" value="Bacteria"/>
</dbReference>
<dbReference type="InParanoid" id="O31463"/>
<dbReference type="OrthoDB" id="9803687at2"/>
<dbReference type="PhylomeDB" id="O31463"/>
<dbReference type="BioCyc" id="BSUB:BSU02410-MONOMER"/>
<dbReference type="Proteomes" id="UP000001570">
    <property type="component" value="Chromosome"/>
</dbReference>
<dbReference type="GO" id="GO:0008898">
    <property type="term" value="F:S-adenosylmethionine-homocysteine S-methyltransferase activity"/>
    <property type="evidence" value="ECO:0000318"/>
    <property type="project" value="GO_Central"/>
</dbReference>
<dbReference type="GO" id="GO:0061627">
    <property type="term" value="F:S-methylmethionine-homocysteine S-methyltransferase activity"/>
    <property type="evidence" value="ECO:0007669"/>
    <property type="project" value="RHEA"/>
</dbReference>
<dbReference type="GO" id="GO:0008270">
    <property type="term" value="F:zinc ion binding"/>
    <property type="evidence" value="ECO:0007669"/>
    <property type="project" value="InterPro"/>
</dbReference>
<dbReference type="GO" id="GO:0009086">
    <property type="term" value="P:methionine biosynthetic process"/>
    <property type="evidence" value="ECO:0000318"/>
    <property type="project" value="GO_Central"/>
</dbReference>
<dbReference type="GO" id="GO:0032259">
    <property type="term" value="P:methylation"/>
    <property type="evidence" value="ECO:0007669"/>
    <property type="project" value="UniProtKB-KW"/>
</dbReference>
<dbReference type="GO" id="GO:0033528">
    <property type="term" value="P:S-methylmethionine cycle"/>
    <property type="evidence" value="ECO:0000318"/>
    <property type="project" value="GO_Central"/>
</dbReference>
<dbReference type="FunFam" id="3.20.20.330:FF:000002">
    <property type="entry name" value="Homocysteine S-methyltransferase"/>
    <property type="match status" value="1"/>
</dbReference>
<dbReference type="Gene3D" id="3.20.20.330">
    <property type="entry name" value="Homocysteine-binding-like domain"/>
    <property type="match status" value="1"/>
</dbReference>
<dbReference type="InterPro" id="IPR017226">
    <property type="entry name" value="Betaine-hCys_S-MeTrfase_BHMT"/>
</dbReference>
<dbReference type="InterPro" id="IPR003726">
    <property type="entry name" value="HCY_dom"/>
</dbReference>
<dbReference type="InterPro" id="IPR036589">
    <property type="entry name" value="HCY_dom_sf"/>
</dbReference>
<dbReference type="InterPro" id="IPR051486">
    <property type="entry name" value="Hcy_S-methyltransferase"/>
</dbReference>
<dbReference type="NCBIfam" id="NF007020">
    <property type="entry name" value="PRK09485.1"/>
    <property type="match status" value="1"/>
</dbReference>
<dbReference type="PANTHER" id="PTHR46015:SF1">
    <property type="entry name" value="HOMOCYSTEINE S-METHYLTRANSFERASE-LIKE ISOFORM 1"/>
    <property type="match status" value="1"/>
</dbReference>
<dbReference type="PANTHER" id="PTHR46015">
    <property type="entry name" value="ZGC:172121"/>
    <property type="match status" value="1"/>
</dbReference>
<dbReference type="Pfam" id="PF02574">
    <property type="entry name" value="S-methyl_trans"/>
    <property type="match status" value="1"/>
</dbReference>
<dbReference type="PIRSF" id="PIRSF037505">
    <property type="entry name" value="Betaine_HMT"/>
    <property type="match status" value="1"/>
</dbReference>
<dbReference type="SUPFAM" id="SSF82282">
    <property type="entry name" value="Homocysteine S-methyltransferase"/>
    <property type="match status" value="1"/>
</dbReference>
<dbReference type="PROSITE" id="PS50970">
    <property type="entry name" value="HCY"/>
    <property type="match status" value="1"/>
</dbReference>
<evidence type="ECO:0000255" key="1">
    <source>
        <dbReference type="PROSITE-ProRule" id="PRU00333"/>
    </source>
</evidence>
<evidence type="ECO:0000269" key="2">
    <source>
    </source>
</evidence>
<feature type="chain" id="PRO_0000379124" description="Homocysteine S-methyltransferase YbgG">
    <location>
        <begin position="1"/>
        <end position="315"/>
    </location>
</feature>
<feature type="domain" description="Hcy-binding" evidence="1">
    <location>
        <begin position="2"/>
        <end position="309"/>
    </location>
</feature>
<feature type="binding site" evidence="1">
    <location>
        <position position="229"/>
    </location>
    <ligand>
        <name>Zn(2+)</name>
        <dbReference type="ChEBI" id="CHEBI:29105"/>
    </ligand>
</feature>
<feature type="binding site" evidence="1">
    <location>
        <position position="294"/>
    </location>
    <ligand>
        <name>Zn(2+)</name>
        <dbReference type="ChEBI" id="CHEBI:29105"/>
    </ligand>
</feature>
<feature type="binding site" evidence="1">
    <location>
        <position position="295"/>
    </location>
    <ligand>
        <name>Zn(2+)</name>
        <dbReference type="ChEBI" id="CHEBI:29105"/>
    </ligand>
</feature>
<gene>
    <name type="primary">ybgG</name>
    <name type="ordered locus">BSU02410</name>
</gene>